<evidence type="ECO:0000250" key="1">
    <source>
        <dbReference type="UniProtKB" id="P23611"/>
    </source>
</evidence>
<evidence type="ECO:0000250" key="2">
    <source>
        <dbReference type="UniProtKB" id="Q02556"/>
    </source>
</evidence>
<evidence type="ECO:0000255" key="3">
    <source>
        <dbReference type="PROSITE-ProRule" id="PRU00840"/>
    </source>
</evidence>
<evidence type="ECO:0000303" key="4">
    <source>
    </source>
</evidence>
<evidence type="ECO:0000305" key="5"/>
<proteinExistence type="evidence at transcript level"/>
<gene>
    <name type="primary">IRF8</name>
    <name evidence="4" type="synonym">ICSBP</name>
    <name type="synonym">ICSBP1</name>
</gene>
<reference key="1">
    <citation type="journal article" date="1995" name="Proc. Natl. Acad. Sci. U.S.A.">
        <title>Chicken interferon consensus sequence-binding protein (ICSBP) and interferon regulatory factor (IRF) 1 genes reveal evolutionary conservation in the IRF gene family.</title>
        <authorList>
            <person name="Jungwirth C."/>
            <person name="Rebbert M."/>
            <person name="Ozato K."/>
            <person name="Degen H.J."/>
            <person name="Schultz U."/>
            <person name="Dawid I.B."/>
        </authorList>
    </citation>
    <scope>NUCLEOTIDE SEQUENCE [MRNA]</scope>
</reference>
<name>IRF8_CHICK</name>
<dbReference type="EMBL" id="L39767">
    <property type="protein sequence ID" value="AAA62159.1"/>
    <property type="molecule type" value="mRNA"/>
</dbReference>
<dbReference type="RefSeq" id="NP_990747.1">
    <property type="nucleotide sequence ID" value="NM_205416.1"/>
</dbReference>
<dbReference type="RefSeq" id="XP_015148037.1">
    <property type="nucleotide sequence ID" value="XM_015292551.4"/>
</dbReference>
<dbReference type="RefSeq" id="XP_015148038.1">
    <property type="nucleotide sequence ID" value="XM_015292552.4"/>
</dbReference>
<dbReference type="RefSeq" id="XP_015148039.1">
    <property type="nucleotide sequence ID" value="XM_015292553.4"/>
</dbReference>
<dbReference type="RefSeq" id="XP_046781325.1">
    <property type="nucleotide sequence ID" value="XM_046925369.1"/>
</dbReference>
<dbReference type="RefSeq" id="XP_046781326.1">
    <property type="nucleotide sequence ID" value="XM_046925370.1"/>
</dbReference>
<dbReference type="RefSeq" id="XP_046781327.1">
    <property type="nucleotide sequence ID" value="XM_046925371.1"/>
</dbReference>
<dbReference type="SMR" id="Q90871"/>
<dbReference type="FunCoup" id="Q90871">
    <property type="interactions" value="112"/>
</dbReference>
<dbReference type="STRING" id="9031.ENSGALP00000009229"/>
<dbReference type="PaxDb" id="9031-ENSGALP00000009229"/>
<dbReference type="Ensembl" id="ENSGALT00010016060.1">
    <property type="protein sequence ID" value="ENSGALP00010009233.1"/>
    <property type="gene ID" value="ENSGALG00010006715.1"/>
</dbReference>
<dbReference type="GeneID" id="396385"/>
<dbReference type="KEGG" id="gga:396385"/>
<dbReference type="CTD" id="3394"/>
<dbReference type="VEuPathDB" id="HostDB:geneid_396385"/>
<dbReference type="eggNOG" id="ENOG502QT9P">
    <property type="taxonomic scope" value="Eukaryota"/>
</dbReference>
<dbReference type="GeneTree" id="ENSGT00940000158140"/>
<dbReference type="HOGENOM" id="CLU_031544_1_1_1"/>
<dbReference type="InParanoid" id="Q90871"/>
<dbReference type="OMA" id="EICASHQ"/>
<dbReference type="OrthoDB" id="9922389at2759"/>
<dbReference type="PhylomeDB" id="Q90871"/>
<dbReference type="TreeFam" id="TF328512"/>
<dbReference type="PRO" id="PR:Q90871"/>
<dbReference type="Proteomes" id="UP000000539">
    <property type="component" value="Chromosome 11"/>
</dbReference>
<dbReference type="Bgee" id="ENSGALG00000005757">
    <property type="expression patterns" value="Expressed in spleen and 13 other cell types or tissues"/>
</dbReference>
<dbReference type="GO" id="GO:0005737">
    <property type="term" value="C:cytoplasm"/>
    <property type="evidence" value="ECO:0000250"/>
    <property type="project" value="UniProtKB"/>
</dbReference>
<dbReference type="GO" id="GO:0005654">
    <property type="term" value="C:nucleoplasm"/>
    <property type="evidence" value="ECO:0007669"/>
    <property type="project" value="Ensembl"/>
</dbReference>
<dbReference type="GO" id="GO:0005634">
    <property type="term" value="C:nucleus"/>
    <property type="evidence" value="ECO:0000250"/>
    <property type="project" value="UniProtKB"/>
</dbReference>
<dbReference type="GO" id="GO:0000981">
    <property type="term" value="F:DNA-binding transcription factor activity, RNA polymerase II-specific"/>
    <property type="evidence" value="ECO:0000318"/>
    <property type="project" value="GO_Central"/>
</dbReference>
<dbReference type="GO" id="GO:0001227">
    <property type="term" value="F:DNA-binding transcription repressor activity, RNA polymerase II-specific"/>
    <property type="evidence" value="ECO:0007669"/>
    <property type="project" value="Ensembl"/>
</dbReference>
<dbReference type="GO" id="GO:0000978">
    <property type="term" value="F:RNA polymerase II cis-regulatory region sequence-specific DNA binding"/>
    <property type="evidence" value="ECO:0000318"/>
    <property type="project" value="GO_Central"/>
</dbReference>
<dbReference type="GO" id="GO:0071222">
    <property type="term" value="P:cellular response to lipopolysaccharide"/>
    <property type="evidence" value="ECO:0007669"/>
    <property type="project" value="Ensembl"/>
</dbReference>
<dbReference type="GO" id="GO:0071346">
    <property type="term" value="P:cellular response to type II interferon"/>
    <property type="evidence" value="ECO:0000250"/>
    <property type="project" value="UniProtKB"/>
</dbReference>
<dbReference type="GO" id="GO:0042742">
    <property type="term" value="P:defense response to bacterium"/>
    <property type="evidence" value="ECO:0007669"/>
    <property type="project" value="Ensembl"/>
</dbReference>
<dbReference type="GO" id="GO:0042832">
    <property type="term" value="P:defense response to protozoan"/>
    <property type="evidence" value="ECO:0007669"/>
    <property type="project" value="Ensembl"/>
</dbReference>
<dbReference type="GO" id="GO:0097028">
    <property type="term" value="P:dendritic cell differentiation"/>
    <property type="evidence" value="ECO:0000250"/>
    <property type="project" value="UniProtKB"/>
</dbReference>
<dbReference type="GO" id="GO:0006955">
    <property type="term" value="P:immune response"/>
    <property type="evidence" value="ECO:0000250"/>
    <property type="project" value="UniProtKB"/>
</dbReference>
<dbReference type="GO" id="GO:0002376">
    <property type="term" value="P:immune system process"/>
    <property type="evidence" value="ECO:0000318"/>
    <property type="project" value="GO_Central"/>
</dbReference>
<dbReference type="GO" id="GO:0030099">
    <property type="term" value="P:myeloid cell differentiation"/>
    <property type="evidence" value="ECO:0007669"/>
    <property type="project" value="Ensembl"/>
</dbReference>
<dbReference type="GO" id="GO:0000122">
    <property type="term" value="P:negative regulation of transcription by RNA polymerase II"/>
    <property type="evidence" value="ECO:0000250"/>
    <property type="project" value="UniProtKB"/>
</dbReference>
<dbReference type="GO" id="GO:0006909">
    <property type="term" value="P:phagocytosis"/>
    <property type="evidence" value="ECO:0007669"/>
    <property type="project" value="Ensembl"/>
</dbReference>
<dbReference type="GO" id="GO:0002273">
    <property type="term" value="P:plasmacytoid dendritic cell differentiation"/>
    <property type="evidence" value="ECO:0000250"/>
    <property type="project" value="UniProtKB"/>
</dbReference>
<dbReference type="GO" id="GO:0032735">
    <property type="term" value="P:positive regulation of interleukin-12 production"/>
    <property type="evidence" value="ECO:0007669"/>
    <property type="project" value="Ensembl"/>
</dbReference>
<dbReference type="GO" id="GO:0045944">
    <property type="term" value="P:positive regulation of transcription by RNA polymerase II"/>
    <property type="evidence" value="ECO:0000250"/>
    <property type="project" value="UniProtKB"/>
</dbReference>
<dbReference type="GO" id="GO:0032729">
    <property type="term" value="P:positive regulation of type II interferon production"/>
    <property type="evidence" value="ECO:0007669"/>
    <property type="project" value="Ensembl"/>
</dbReference>
<dbReference type="GO" id="GO:0006357">
    <property type="term" value="P:regulation of transcription by RNA polymerase II"/>
    <property type="evidence" value="ECO:0000318"/>
    <property type="project" value="GO_Central"/>
</dbReference>
<dbReference type="GO" id="GO:0032479">
    <property type="term" value="P:regulation of type I interferon production"/>
    <property type="evidence" value="ECO:0000250"/>
    <property type="project" value="UniProtKB"/>
</dbReference>
<dbReference type="CDD" id="cd00103">
    <property type="entry name" value="IRF"/>
    <property type="match status" value="1"/>
</dbReference>
<dbReference type="FunFam" id="1.10.10.10:FF:000041">
    <property type="entry name" value="Interferon regulatory factor 4"/>
    <property type="match status" value="1"/>
</dbReference>
<dbReference type="FunFam" id="2.60.200.10:FF:000010">
    <property type="entry name" value="Interferon regulatory factor 8"/>
    <property type="match status" value="1"/>
</dbReference>
<dbReference type="Gene3D" id="2.60.200.10">
    <property type="match status" value="1"/>
</dbReference>
<dbReference type="Gene3D" id="1.10.10.10">
    <property type="entry name" value="Winged helix-like DNA-binding domain superfamily/Winged helix DNA-binding domain"/>
    <property type="match status" value="1"/>
</dbReference>
<dbReference type="InterPro" id="IPR019817">
    <property type="entry name" value="Interferon_reg_fac_CS"/>
</dbReference>
<dbReference type="InterPro" id="IPR001346">
    <property type="entry name" value="Interferon_reg_fact_DNA-bd_dom"/>
</dbReference>
<dbReference type="InterPro" id="IPR019471">
    <property type="entry name" value="Interferon_reg_factor-3"/>
</dbReference>
<dbReference type="InterPro" id="IPR017855">
    <property type="entry name" value="SMAD-like_dom_sf"/>
</dbReference>
<dbReference type="InterPro" id="IPR008984">
    <property type="entry name" value="SMAD_FHA_dom_sf"/>
</dbReference>
<dbReference type="InterPro" id="IPR036388">
    <property type="entry name" value="WH-like_DNA-bd_sf"/>
</dbReference>
<dbReference type="InterPro" id="IPR036390">
    <property type="entry name" value="WH_DNA-bd_sf"/>
</dbReference>
<dbReference type="PANTHER" id="PTHR11949">
    <property type="entry name" value="INTERFERON REGULATORY FACTOR"/>
    <property type="match status" value="1"/>
</dbReference>
<dbReference type="PANTHER" id="PTHR11949:SF7">
    <property type="entry name" value="INTERFERON REGULATORY FACTOR 8"/>
    <property type="match status" value="1"/>
</dbReference>
<dbReference type="Pfam" id="PF00605">
    <property type="entry name" value="IRF"/>
    <property type="match status" value="1"/>
</dbReference>
<dbReference type="Pfam" id="PF10401">
    <property type="entry name" value="IRF-3"/>
    <property type="match status" value="1"/>
</dbReference>
<dbReference type="PRINTS" id="PR00267">
    <property type="entry name" value="INTFRNREGFCT"/>
</dbReference>
<dbReference type="SMART" id="SM00348">
    <property type="entry name" value="IRF"/>
    <property type="match status" value="1"/>
</dbReference>
<dbReference type="SMART" id="SM01243">
    <property type="entry name" value="IRF-3"/>
    <property type="match status" value="1"/>
</dbReference>
<dbReference type="SUPFAM" id="SSF49879">
    <property type="entry name" value="SMAD/FHA domain"/>
    <property type="match status" value="1"/>
</dbReference>
<dbReference type="SUPFAM" id="SSF46785">
    <property type="entry name" value="Winged helix' DNA-binding domain"/>
    <property type="match status" value="1"/>
</dbReference>
<dbReference type="PROSITE" id="PS00601">
    <property type="entry name" value="IRF_1"/>
    <property type="match status" value="1"/>
</dbReference>
<dbReference type="PROSITE" id="PS51507">
    <property type="entry name" value="IRF_2"/>
    <property type="match status" value="1"/>
</dbReference>
<feature type="chain" id="PRO_0000154566" description="Interferon regulatory factor 8">
    <location>
        <begin position="1"/>
        <end position="425"/>
    </location>
</feature>
<feature type="DNA-binding region" description="IRF tryptophan pentad repeat" evidence="3">
    <location>
        <begin position="7"/>
        <end position="114"/>
    </location>
</feature>
<keyword id="KW-0010">Activator</keyword>
<keyword id="KW-0963">Cytoplasm</keyword>
<keyword id="KW-0238">DNA-binding</keyword>
<keyword id="KW-0539">Nucleus</keyword>
<keyword id="KW-1185">Reference proteome</keyword>
<keyword id="KW-0678">Repressor</keyword>
<keyword id="KW-0804">Transcription</keyword>
<keyword id="KW-0805">Transcription regulation</keyword>
<accession>Q90871</accession>
<comment type="function">
    <text evidence="1 2">Plays a role as a transcriptional activator or repressor. Specifically binds to the upstream regulatory region of type I IFN and IFN-inducible MHC class I genes (the interferon consensus sequence (ICS)). Plays a regulatory role in cells of the immune system (By similarity).</text>
</comment>
<comment type="subcellular location">
    <subcellularLocation>
        <location evidence="2">Nucleus</location>
    </subcellularLocation>
    <subcellularLocation>
        <location evidence="2">Cytoplasm</location>
    </subcellularLocation>
    <text evidence="2">In resting macrophages, localizes in the cytoplasm. Translocated in the nucleus upon IFN-gamma induction.</text>
</comment>
<comment type="similarity">
    <text evidence="3">Belongs to the IRF family.</text>
</comment>
<organism>
    <name type="scientific">Gallus gallus</name>
    <name type="common">Chicken</name>
    <dbReference type="NCBI Taxonomy" id="9031"/>
    <lineage>
        <taxon>Eukaryota</taxon>
        <taxon>Metazoa</taxon>
        <taxon>Chordata</taxon>
        <taxon>Craniata</taxon>
        <taxon>Vertebrata</taxon>
        <taxon>Euteleostomi</taxon>
        <taxon>Archelosauria</taxon>
        <taxon>Archosauria</taxon>
        <taxon>Dinosauria</taxon>
        <taxon>Saurischia</taxon>
        <taxon>Theropoda</taxon>
        <taxon>Coelurosauria</taxon>
        <taxon>Aves</taxon>
        <taxon>Neognathae</taxon>
        <taxon>Galloanserae</taxon>
        <taxon>Galliformes</taxon>
        <taxon>Phasianidae</taxon>
        <taxon>Phasianinae</taxon>
        <taxon>Gallus</taxon>
    </lineage>
</organism>
<sequence length="425" mass="49171">MCDRNGGRRLRQWLIEQIDSEQYPGLIWENEEKTMFRIPWKHAGKQDYNQEVDASIFKAWAVFKGKFKEGDKAEPATWKTRLRCALNKSPDFEEVTDRSQLDISEPYKVYRIVPEEEQKCKIGVGNGSSLTDVGDMDCSPSAIDDLMKEPPCVDEYLGIIKRSPSPPQETCRNPPIPDWWMQQPSPSLPLVNGYTGYEQHHSGYSQMVITFFYSGRLVGHITTSYPEGCRLSLSQPSNHGEKLYTPDSLEHVRFPSAEAIQNDRQKQITKKLFGHLERGVLLHSNKQGIFIKRLCQGRVFWSGNTVVYKDRPSKLDRDEVVKIFDTNLFFRELQQYYNNQGRFPDSRVMLCFGEEFPDTVPLRCKLILVQVEQLCVRQVMEEAGKTCSSPMLPDDVQQEQVYRIFQDICGPHQRPLFRENQQIAV</sequence>
<protein>
    <recommendedName>
        <fullName evidence="5">Interferon regulatory factor 8</fullName>
        <shortName>IRF-8</shortName>
    </recommendedName>
    <alternativeName>
        <fullName evidence="4">Interferon consensus sequence-binding protein</fullName>
        <shortName evidence="4">ICSBP</shortName>
    </alternativeName>
</protein>